<protein>
    <recommendedName>
        <fullName evidence="1">DNA-directed RNA polymerase subunit beta'</fullName>
        <shortName evidence="1">RNAP subunit beta'</shortName>
        <ecNumber evidence="1">2.7.7.6</ecNumber>
    </recommendedName>
    <alternativeName>
        <fullName evidence="1">RNA polymerase subunit beta'</fullName>
    </alternativeName>
    <alternativeName>
        <fullName evidence="1">Transcriptase subunit beta'</fullName>
    </alternativeName>
</protein>
<dbReference type="EC" id="2.7.7.6" evidence="1"/>
<dbReference type="EMBL" id="CP001337">
    <property type="protein sequence ID" value="ACL25574.1"/>
    <property type="molecule type" value="Genomic_DNA"/>
</dbReference>
<dbReference type="RefSeq" id="WP_015941431.1">
    <property type="nucleotide sequence ID" value="NC_011831.1"/>
</dbReference>
<dbReference type="SMR" id="B8G4U8"/>
<dbReference type="STRING" id="326427.Cagg_2706"/>
<dbReference type="KEGG" id="cag:Cagg_2706"/>
<dbReference type="eggNOG" id="COG0086">
    <property type="taxonomic scope" value="Bacteria"/>
</dbReference>
<dbReference type="HOGENOM" id="CLU_000524_3_1_0"/>
<dbReference type="OrthoDB" id="9815296at2"/>
<dbReference type="Proteomes" id="UP000002508">
    <property type="component" value="Chromosome"/>
</dbReference>
<dbReference type="GO" id="GO:0000428">
    <property type="term" value="C:DNA-directed RNA polymerase complex"/>
    <property type="evidence" value="ECO:0007669"/>
    <property type="project" value="UniProtKB-KW"/>
</dbReference>
<dbReference type="GO" id="GO:0003677">
    <property type="term" value="F:DNA binding"/>
    <property type="evidence" value="ECO:0007669"/>
    <property type="project" value="UniProtKB-UniRule"/>
</dbReference>
<dbReference type="GO" id="GO:0003899">
    <property type="term" value="F:DNA-directed RNA polymerase activity"/>
    <property type="evidence" value="ECO:0007669"/>
    <property type="project" value="UniProtKB-UniRule"/>
</dbReference>
<dbReference type="GO" id="GO:0000287">
    <property type="term" value="F:magnesium ion binding"/>
    <property type="evidence" value="ECO:0007669"/>
    <property type="project" value="UniProtKB-UniRule"/>
</dbReference>
<dbReference type="GO" id="GO:0008270">
    <property type="term" value="F:zinc ion binding"/>
    <property type="evidence" value="ECO:0007669"/>
    <property type="project" value="UniProtKB-UniRule"/>
</dbReference>
<dbReference type="GO" id="GO:0006351">
    <property type="term" value="P:DNA-templated transcription"/>
    <property type="evidence" value="ECO:0007669"/>
    <property type="project" value="UniProtKB-UniRule"/>
</dbReference>
<dbReference type="CDD" id="cd02655">
    <property type="entry name" value="RNAP_beta'_C"/>
    <property type="match status" value="1"/>
</dbReference>
<dbReference type="CDD" id="cd01609">
    <property type="entry name" value="RNAP_beta'_N"/>
    <property type="match status" value="1"/>
</dbReference>
<dbReference type="FunFam" id="1.10.150.390:FF:000002">
    <property type="entry name" value="DNA-directed RNA polymerase subunit beta"/>
    <property type="match status" value="1"/>
</dbReference>
<dbReference type="FunFam" id="4.10.860.120:FF:000001">
    <property type="entry name" value="DNA-directed RNA polymerase subunit beta"/>
    <property type="match status" value="1"/>
</dbReference>
<dbReference type="Gene3D" id="1.10.132.30">
    <property type="match status" value="1"/>
</dbReference>
<dbReference type="Gene3D" id="1.10.150.390">
    <property type="match status" value="1"/>
</dbReference>
<dbReference type="Gene3D" id="1.10.1790.20">
    <property type="match status" value="1"/>
</dbReference>
<dbReference type="Gene3D" id="1.10.40.90">
    <property type="match status" value="1"/>
</dbReference>
<dbReference type="Gene3D" id="2.40.40.20">
    <property type="match status" value="1"/>
</dbReference>
<dbReference type="Gene3D" id="2.40.50.100">
    <property type="match status" value="2"/>
</dbReference>
<dbReference type="Gene3D" id="4.10.860.120">
    <property type="entry name" value="RNA polymerase II, clamp domain"/>
    <property type="match status" value="1"/>
</dbReference>
<dbReference type="Gene3D" id="1.10.274.100">
    <property type="entry name" value="RNA polymerase Rpb1, domain 3"/>
    <property type="match status" value="1"/>
</dbReference>
<dbReference type="HAMAP" id="MF_01322">
    <property type="entry name" value="RNApol_bact_RpoC"/>
    <property type="match status" value="1"/>
</dbReference>
<dbReference type="InterPro" id="IPR045867">
    <property type="entry name" value="DNA-dir_RpoC_beta_prime"/>
</dbReference>
<dbReference type="InterPro" id="IPR012754">
    <property type="entry name" value="DNA-dir_RpoC_beta_prime_bact"/>
</dbReference>
<dbReference type="InterPro" id="IPR000722">
    <property type="entry name" value="RNA_pol_asu"/>
</dbReference>
<dbReference type="InterPro" id="IPR006592">
    <property type="entry name" value="RNA_pol_N"/>
</dbReference>
<dbReference type="InterPro" id="IPR007080">
    <property type="entry name" value="RNA_pol_Rpb1_1"/>
</dbReference>
<dbReference type="InterPro" id="IPR007066">
    <property type="entry name" value="RNA_pol_Rpb1_3"/>
</dbReference>
<dbReference type="InterPro" id="IPR042102">
    <property type="entry name" value="RNA_pol_Rpb1_3_sf"/>
</dbReference>
<dbReference type="InterPro" id="IPR007083">
    <property type="entry name" value="RNA_pol_Rpb1_4"/>
</dbReference>
<dbReference type="InterPro" id="IPR007081">
    <property type="entry name" value="RNA_pol_Rpb1_5"/>
</dbReference>
<dbReference type="InterPro" id="IPR044893">
    <property type="entry name" value="RNA_pol_Rpb1_clamp_domain"/>
</dbReference>
<dbReference type="InterPro" id="IPR038120">
    <property type="entry name" value="Rpb1_funnel_sf"/>
</dbReference>
<dbReference type="NCBIfam" id="TIGR02386">
    <property type="entry name" value="rpoC_TIGR"/>
    <property type="match status" value="1"/>
</dbReference>
<dbReference type="PANTHER" id="PTHR19376">
    <property type="entry name" value="DNA-DIRECTED RNA POLYMERASE"/>
    <property type="match status" value="1"/>
</dbReference>
<dbReference type="PANTHER" id="PTHR19376:SF54">
    <property type="entry name" value="DNA-DIRECTED RNA POLYMERASE SUBUNIT BETA"/>
    <property type="match status" value="1"/>
</dbReference>
<dbReference type="Pfam" id="PF04997">
    <property type="entry name" value="RNA_pol_Rpb1_1"/>
    <property type="match status" value="2"/>
</dbReference>
<dbReference type="Pfam" id="PF00623">
    <property type="entry name" value="RNA_pol_Rpb1_2"/>
    <property type="match status" value="1"/>
</dbReference>
<dbReference type="Pfam" id="PF04983">
    <property type="entry name" value="RNA_pol_Rpb1_3"/>
    <property type="match status" value="1"/>
</dbReference>
<dbReference type="Pfam" id="PF05000">
    <property type="entry name" value="RNA_pol_Rpb1_4"/>
    <property type="match status" value="1"/>
</dbReference>
<dbReference type="Pfam" id="PF04998">
    <property type="entry name" value="RNA_pol_Rpb1_5"/>
    <property type="match status" value="1"/>
</dbReference>
<dbReference type="SMART" id="SM00663">
    <property type="entry name" value="RPOLA_N"/>
    <property type="match status" value="1"/>
</dbReference>
<dbReference type="SUPFAM" id="SSF64484">
    <property type="entry name" value="beta and beta-prime subunits of DNA dependent RNA-polymerase"/>
    <property type="match status" value="1"/>
</dbReference>
<name>RPOC_CHLAD</name>
<feature type="chain" id="PRO_1000165838" description="DNA-directed RNA polymerase subunit beta'">
    <location>
        <begin position="1"/>
        <end position="1500"/>
    </location>
</feature>
<feature type="region of interest" description="Disordered" evidence="2">
    <location>
        <begin position="180"/>
        <end position="199"/>
    </location>
</feature>
<feature type="region of interest" description="Disordered" evidence="2">
    <location>
        <begin position="1440"/>
        <end position="1500"/>
    </location>
</feature>
<feature type="compositionally biased region" description="Polar residues" evidence="2">
    <location>
        <begin position="1449"/>
        <end position="1468"/>
    </location>
</feature>
<feature type="binding site" evidence="1">
    <location>
        <position position="60"/>
    </location>
    <ligand>
        <name>Zn(2+)</name>
        <dbReference type="ChEBI" id="CHEBI:29105"/>
        <label>1</label>
    </ligand>
</feature>
<feature type="binding site" evidence="1">
    <location>
        <position position="62"/>
    </location>
    <ligand>
        <name>Zn(2+)</name>
        <dbReference type="ChEBI" id="CHEBI:29105"/>
        <label>1</label>
    </ligand>
</feature>
<feature type="binding site" evidence="1">
    <location>
        <position position="75"/>
    </location>
    <ligand>
        <name>Zn(2+)</name>
        <dbReference type="ChEBI" id="CHEBI:29105"/>
        <label>1</label>
    </ligand>
</feature>
<feature type="binding site" evidence="1">
    <location>
        <position position="78"/>
    </location>
    <ligand>
        <name>Zn(2+)</name>
        <dbReference type="ChEBI" id="CHEBI:29105"/>
        <label>1</label>
    </ligand>
</feature>
<feature type="binding site" evidence="1">
    <location>
        <position position="626"/>
    </location>
    <ligand>
        <name>Mg(2+)</name>
        <dbReference type="ChEBI" id="CHEBI:18420"/>
    </ligand>
</feature>
<feature type="binding site" evidence="1">
    <location>
        <position position="628"/>
    </location>
    <ligand>
        <name>Mg(2+)</name>
        <dbReference type="ChEBI" id="CHEBI:18420"/>
    </ligand>
</feature>
<feature type="binding site" evidence="1">
    <location>
        <position position="630"/>
    </location>
    <ligand>
        <name>Mg(2+)</name>
        <dbReference type="ChEBI" id="CHEBI:18420"/>
    </ligand>
</feature>
<feature type="binding site" evidence="1">
    <location>
        <position position="1002"/>
    </location>
    <ligand>
        <name>Zn(2+)</name>
        <dbReference type="ChEBI" id="CHEBI:29105"/>
        <label>2</label>
    </ligand>
</feature>
<feature type="binding site" evidence="1">
    <location>
        <position position="1075"/>
    </location>
    <ligand>
        <name>Zn(2+)</name>
        <dbReference type="ChEBI" id="CHEBI:29105"/>
        <label>2</label>
    </ligand>
</feature>
<feature type="binding site" evidence="1">
    <location>
        <position position="1082"/>
    </location>
    <ligand>
        <name>Zn(2+)</name>
        <dbReference type="ChEBI" id="CHEBI:29105"/>
        <label>2</label>
    </ligand>
</feature>
<feature type="binding site" evidence="1">
    <location>
        <position position="1085"/>
    </location>
    <ligand>
        <name>Zn(2+)</name>
        <dbReference type="ChEBI" id="CHEBI:29105"/>
        <label>2</label>
    </ligand>
</feature>
<proteinExistence type="inferred from homology"/>
<organism>
    <name type="scientific">Chloroflexus aggregans (strain MD-66 / DSM 9485)</name>
    <dbReference type="NCBI Taxonomy" id="326427"/>
    <lineage>
        <taxon>Bacteria</taxon>
        <taxon>Bacillati</taxon>
        <taxon>Chloroflexota</taxon>
        <taxon>Chloroflexia</taxon>
        <taxon>Chloroflexales</taxon>
        <taxon>Chloroflexineae</taxon>
        <taxon>Chloroflexaceae</taxon>
        <taxon>Chloroflexus</taxon>
    </lineage>
</organism>
<reference key="1">
    <citation type="submission" date="2008-12" db="EMBL/GenBank/DDBJ databases">
        <title>Complete sequence of Chloroflexus aggregans DSM 9485.</title>
        <authorList>
            <consortium name="US DOE Joint Genome Institute"/>
            <person name="Lucas S."/>
            <person name="Copeland A."/>
            <person name="Lapidus A."/>
            <person name="Glavina del Rio T."/>
            <person name="Dalin E."/>
            <person name="Tice H."/>
            <person name="Pitluck S."/>
            <person name="Foster B."/>
            <person name="Larimer F."/>
            <person name="Land M."/>
            <person name="Hauser L."/>
            <person name="Kyrpides N."/>
            <person name="Mikhailova N."/>
            <person name="Bryant D.A."/>
            <person name="Richardson P."/>
        </authorList>
    </citation>
    <scope>NUCLEOTIDE SEQUENCE [LARGE SCALE GENOMIC DNA]</scope>
    <source>
        <strain>MD-66 / DSM 9485</strain>
    </source>
</reference>
<evidence type="ECO:0000255" key="1">
    <source>
        <dbReference type="HAMAP-Rule" id="MF_01322"/>
    </source>
</evidence>
<evidence type="ECO:0000256" key="2">
    <source>
        <dbReference type="SAM" id="MobiDB-lite"/>
    </source>
</evidence>
<accession>B8G4U8</accession>
<comment type="function">
    <text evidence="1">DNA-dependent RNA polymerase catalyzes the transcription of DNA into RNA using the four ribonucleoside triphosphates as substrates.</text>
</comment>
<comment type="catalytic activity">
    <reaction evidence="1">
        <text>RNA(n) + a ribonucleoside 5'-triphosphate = RNA(n+1) + diphosphate</text>
        <dbReference type="Rhea" id="RHEA:21248"/>
        <dbReference type="Rhea" id="RHEA-COMP:14527"/>
        <dbReference type="Rhea" id="RHEA-COMP:17342"/>
        <dbReference type="ChEBI" id="CHEBI:33019"/>
        <dbReference type="ChEBI" id="CHEBI:61557"/>
        <dbReference type="ChEBI" id="CHEBI:140395"/>
        <dbReference type="EC" id="2.7.7.6"/>
    </reaction>
</comment>
<comment type="cofactor">
    <cofactor evidence="1">
        <name>Mg(2+)</name>
        <dbReference type="ChEBI" id="CHEBI:18420"/>
    </cofactor>
    <text evidence="1">Binds 1 Mg(2+) ion per subunit.</text>
</comment>
<comment type="cofactor">
    <cofactor evidence="1">
        <name>Zn(2+)</name>
        <dbReference type="ChEBI" id="CHEBI:29105"/>
    </cofactor>
    <text evidence="1">Binds 2 Zn(2+) ions per subunit.</text>
</comment>
<comment type="subunit">
    <text evidence="1">The RNAP catalytic core consists of 2 alpha, 1 beta, 1 beta' and 1 omega subunit. When a sigma factor is associated with the core the holoenzyme is formed, which can initiate transcription.</text>
</comment>
<comment type="similarity">
    <text evidence="1">Belongs to the RNA polymerase beta' chain family.</text>
</comment>
<gene>
    <name evidence="1" type="primary">rpoC</name>
    <name type="ordered locus">Cagg_2706</name>
</gene>
<keyword id="KW-0240">DNA-directed RNA polymerase</keyword>
<keyword id="KW-0460">Magnesium</keyword>
<keyword id="KW-0479">Metal-binding</keyword>
<keyword id="KW-0548">Nucleotidyltransferase</keyword>
<keyword id="KW-0804">Transcription</keyword>
<keyword id="KW-0808">Transferase</keyword>
<keyword id="KW-0862">Zinc</keyword>
<sequence length="1500" mass="168949">MLEINDFNAIRISLASPEDIRSWSHGEVTKPETINYRTLKPERDGLFCERIFGPTKDWECFCGKYKRVRYKGVVCDKCGVEVTRAKVRRERMGHINLASPVSHIWFVKGTPSRLGLLLDISPRNLERVLYFASYIIVDVKEDMLQVAREMVQEEYAARREKIQKQAEEKRIELSTQLTQDLGGMETAQRSTQRQIEEDYRRQRDELVGEAERLRERLEEMSGTLADEDIIFRGVTVVEEGELINDNTLDQLDELVEQELEVLEERRRRDLADAELLTDAERERKAYEATQEQERLQERLQRELDMLVREEKEKLEQLDKLKVGLIITENEYRQLRDVAPGVFRADMGAGAIRELLERHLNLDKLAEELQAEIQTSQGQRRKKATKRLRIVEAFRKSGNRPEWMILTVLPVIPPDLRPMVQLDGGRFATSDLNDLYRRVINRNNRLKRLIELNAPEIIVRNEKRMLQEAVDALIDNGRRGRAVSGKGKHRLKSLSDMLKGKQGRFRQNLLGKRVDYSGRSVIVVGPNLQLHQCGLPKKMALELFKPFVMRRLVERGVAHNIKNAKRAVERVRPEVWDALEEVIKDYLVLLNRAPSLHRLSIQAFEAKLIEGSAIQLHPLVCAAFNADFDGDQMAVHVPLSRKAQEEARTRMLSKYNLLSPAHGEPIITPSQDIVLGCYYLTMVRDGAKGTGKRFASIDEAMLAYEKGLIDIQAPIWIRMNGSISGKSDRPVRELPPASDGTPRMVIETTIGRVLLNSELQPPLRFRNRLIDKKGLKEIIADCYQYYTSLRNLSEAQLNEVRAAHGNKHVQELARIYGSEMTAQQADRIKTLGFRYATLGGMTIGIDDIEVPAKKYDIVREAEQQVAEVEKQFRRGLITEEERYQEVVRIWQEATKQTIAAVKENLNPFGPVAMMSTSGARGNINQISQMAGMRGLMSDPTGRIIELPIKANFREGLSVLDYFVSTHGGRKGLADTALRTADAGYLTRRLVDVAQDVIINIEDCGTEEGLWLHSADDGELMEKLQVRMLGRILAAPIYDKTTGELIADRNTEIDEELAEKIIAAGHESVFVRSPLTCQAEHGLCRMCYGRNLATGKLVEIGEAVGIIAAQSIGEPGTQLTLRTFHTGGVASADDITQGLPRVQEIFEARVPKGKALLAEIDGVVQIIREDEGVRKIRIVSTNVYTDEYPLTRGFTPVIESESDVYEGQVIAEGPGGEQIIARLSGKAFIQSDRIIISQEDHEERELVVPHNARIRVENGDRVMAGQQLTDGSANPQELLELQGREAVQRYLVNEAQKVYRSQGVNINDKHIEVIARQMLRRVRIEEPGDTGLLPGELIDSAEFRRLNNDIVSQGGDPATAATVLLGITKASLNTDSFLSAASFQETTRVLTDAAIQGKVDYLRGLKENVVIGKLIPAGTGIEKRLERQHEDLISEMARMLEEVQQAEKSAEPTTTALPTTNGHQAPQSDTDALLRARLEELLSGGNDHDDEEDSDHPDLSSL</sequence>